<reference key="1">
    <citation type="journal article" date="1995" name="J. Biol. Chem.">
        <title>Primary structure and developmental expression of Fbn-1, the mouse fibrillin gene.</title>
        <authorList>
            <person name="Yin W."/>
            <person name="Germiller J."/>
            <person name="Sanguineti C."/>
            <person name="Smiley E."/>
            <person name="Pangilinan T."/>
            <person name="Pereira L."/>
            <person name="Ramirez F."/>
            <person name="Bonadio J."/>
        </authorList>
    </citation>
    <scope>NUCLEOTIDE SEQUENCE [MRNA]</scope>
</reference>
<reference key="2">
    <citation type="submission" date="1995-04" db="EMBL/GenBank/DDBJ databases">
        <authorList>
            <person name="Ota K."/>
            <person name="Kumar A."/>
            <person name="Wada J."/>
            <person name="Liu Z."/>
            <person name="Kanwar Y.S."/>
        </authorList>
    </citation>
    <scope>NUCLEOTIDE SEQUENCE [MRNA]</scope>
    <source>
        <strain>CD-1</strain>
        <tissue>Kidney</tissue>
    </source>
</reference>
<reference key="3">
    <citation type="journal article" date="2009" name="PLoS Biol.">
        <title>Lineage-specific biology revealed by a finished genome assembly of the mouse.</title>
        <authorList>
            <person name="Church D.M."/>
            <person name="Goodstadt L."/>
            <person name="Hillier L.W."/>
            <person name="Zody M.C."/>
            <person name="Goldstein S."/>
            <person name="She X."/>
            <person name="Bult C.J."/>
            <person name="Agarwala R."/>
            <person name="Cherry J.L."/>
            <person name="DiCuccio M."/>
            <person name="Hlavina W."/>
            <person name="Kapustin Y."/>
            <person name="Meric P."/>
            <person name="Maglott D."/>
            <person name="Birtle Z."/>
            <person name="Marques A.C."/>
            <person name="Graves T."/>
            <person name="Zhou S."/>
            <person name="Teague B."/>
            <person name="Potamousis K."/>
            <person name="Churas C."/>
            <person name="Place M."/>
            <person name="Herschleb J."/>
            <person name="Runnheim R."/>
            <person name="Forrest D."/>
            <person name="Amos-Landgraf J."/>
            <person name="Schwartz D.C."/>
            <person name="Cheng Z."/>
            <person name="Lindblad-Toh K."/>
            <person name="Eichler E.E."/>
            <person name="Ponting C.P."/>
        </authorList>
    </citation>
    <scope>NUCLEOTIDE SEQUENCE [LARGE SCALE GENOMIC DNA]</scope>
    <source>
        <strain>C57BL/6J</strain>
    </source>
</reference>
<reference key="4">
    <citation type="journal article" date="2006" name="J. Biol. Chem.">
        <title>Fibrillins 1 and 2 perform partially overlapping functions during aortic development.</title>
        <authorList>
            <person name="Carta L."/>
            <person name="Pereira L."/>
            <person name="Arteaga-Solis E."/>
            <person name="Lee-Arteaga S.Y."/>
            <person name="Lenart B."/>
            <person name="Starcher B."/>
            <person name="Merkel C.A."/>
            <person name="Sukoyan M."/>
            <person name="Kerkis A."/>
            <person name="Hazeki N."/>
            <person name="Keene D.R."/>
            <person name="Sakai L.Y."/>
            <person name="Ramirez F."/>
        </authorList>
    </citation>
    <scope>DISRUPTION PHENOTYPE</scope>
</reference>
<reference key="5">
    <citation type="journal article" date="2010" name="Cell">
        <title>A tissue-specific atlas of mouse protein phosphorylation and expression.</title>
        <authorList>
            <person name="Huttlin E.L."/>
            <person name="Jedrychowski M.P."/>
            <person name="Elias J.E."/>
            <person name="Goswami T."/>
            <person name="Rad R."/>
            <person name="Beausoleil S.A."/>
            <person name="Villen J."/>
            <person name="Haas W."/>
            <person name="Sowa M.E."/>
            <person name="Gygi S.P."/>
        </authorList>
    </citation>
    <scope>PHOSPHORYLATION [LARGE SCALE ANALYSIS] AT SER-2705 AND SER-2711</scope>
    <scope>IDENTIFICATION BY MASS SPECTROMETRY [LARGE SCALE ANALYSIS]</scope>
    <source>
        <tissue>Brown adipose tissue</tissue>
        <tissue>Heart</tissue>
        <tissue>Kidney</tissue>
        <tissue>Lung</tissue>
        <tissue>Pancreas</tissue>
        <tissue>Spleen</tissue>
        <tissue>Testis</tissue>
    </source>
</reference>
<reference key="6">
    <citation type="journal article" date="2010" name="J. Biol. Chem.">
        <title>ADAMTSL-6 is a novel extracellular matrix protein that binds to fibrillin-1 and promotes fibrillin-1 fibril formation.</title>
        <authorList>
            <person name="Tsutsui K."/>
            <person name="Manabe R."/>
            <person name="Yamada T."/>
            <person name="Nakano I."/>
            <person name="Oguri Y."/>
            <person name="Keene D.R."/>
            <person name="Sengle G."/>
            <person name="Sakai L.Y."/>
            <person name="Sekiguchi K."/>
        </authorList>
    </citation>
    <scope>INTERACTION WITH THSD4</scope>
</reference>
<reference key="7">
    <citation type="journal article" date="2010" name="J. Cell Biol.">
        <title>Fibrillin-1 and -2 differentially modulate endogenous TGF-{beta} and BMP bioavailability during bone formation.</title>
        <authorList>
            <person name="Nistala H."/>
            <person name="Lee-Arteaga S."/>
            <person name="Smaldone S."/>
            <person name="Siciliano G."/>
            <person name="Carta L."/>
            <person name="Ono R.N."/>
            <person name="Sengle G."/>
            <person name="Arteaga-Solis E."/>
            <person name="Levasseur R."/>
            <person name="Ducy P."/>
            <person name="Sakai L.Y."/>
            <person name="Karsenty G."/>
            <person name="Ramirez F."/>
        </authorList>
    </citation>
    <scope>FUNCTION</scope>
</reference>
<reference key="8">
    <citation type="journal article" date="2013" name="J. Cell Sci.">
        <title>Fibrillin-1 directly regulates osteoclast formation and function by a dual mechanism.</title>
        <authorList>
            <person name="Tiedemann K."/>
            <person name="Boraschi-Diaz I."/>
            <person name="Rajakumar I."/>
            <person name="Kaur J."/>
            <person name="Roughley P."/>
            <person name="Reinhardt D.P."/>
            <person name="Komarova S.V."/>
        </authorList>
    </citation>
    <scope>FUNCTION</scope>
    <scope>SUBCELLULAR LOCATION</scope>
    <scope>TISSUE SPECIFICITY</scope>
</reference>
<reference key="9">
    <citation type="journal article" date="2016" name="Cell">
        <title>Asprosin, a fasting-induced glucogenic protein hormone.</title>
        <authorList>
            <person name="Romere C."/>
            <person name="Duerrschmid C."/>
            <person name="Bournat J."/>
            <person name="Constable P."/>
            <person name="Jain M."/>
            <person name="Xia F."/>
            <person name="Saha P.K."/>
            <person name="Del Solar M."/>
            <person name="Zhu B."/>
            <person name="York B."/>
            <person name="Sarkar P."/>
            <person name="Rendon D.A."/>
            <person name="Gaber M.W."/>
            <person name="LeMaire S.A."/>
            <person name="Coselli J.S."/>
            <person name="Milewicz D.M."/>
            <person name="Sutton V.R."/>
            <person name="Butte N.F."/>
            <person name="Moore D.D."/>
            <person name="Chopra A.R."/>
        </authorList>
    </citation>
    <scope>DEVELOPMENTAL STAGE (ASPROSIN)</scope>
    <scope>TISSUE SPECIFICITY (ASPROSIN)</scope>
</reference>
<reference key="10">
    <citation type="journal article" date="2017" name="Nat. Med.">
        <title>Asprosin is a centrally acting orexigenic hormone.</title>
        <authorList>
            <person name="Duerrschmid C."/>
            <person name="He Y."/>
            <person name="Wang C."/>
            <person name="Li C."/>
            <person name="Bournat J.C."/>
            <person name="Romere C."/>
            <person name="Saha P.K."/>
            <person name="Lee M.E."/>
            <person name="Phillips K.J."/>
            <person name="Jain M."/>
            <person name="Jia P."/>
            <person name="Zhao Z."/>
            <person name="Farias M."/>
            <person name="Wu Q."/>
            <person name="Milewicz D.M."/>
            <person name="Sutton V.R."/>
            <person name="Moore D.D."/>
            <person name="Butte N.F."/>
            <person name="Krashes M.J."/>
            <person name="Xu Y."/>
            <person name="Chopra A.R."/>
        </authorList>
    </citation>
    <scope>FUNCTION (ASPROSIN)</scope>
    <scope>DISRUPTION PHENOTYPE (ASPROSIN)</scope>
</reference>
<reference key="11">
    <citation type="journal article" date="2019" name="Cell Discov.">
        <title>The Asprosin-OLFR734 hormonal signaling axis modulates male fertility.</title>
        <authorList>
            <person name="Wei F."/>
            <person name="Long A."/>
            <person name="Wang Y."/>
        </authorList>
    </citation>
    <scope>FUNCTION (ASPROSIN)</scope>
</reference>
<reference key="12">
    <citation type="journal article" date="2019" name="Cell Metab.">
        <title>OLFR734 mediates glucose metabolism as a receptor of asprosin.</title>
        <authorList>
            <person name="Li E."/>
            <person name="Shan H."/>
            <person name="Chen L."/>
            <person name="Long A."/>
            <person name="Zhang Y."/>
            <person name="Liu Y."/>
            <person name="Jia L."/>
            <person name="Wei F."/>
            <person name="Han J."/>
            <person name="Li T."/>
            <person name="Liu X."/>
            <person name="Deng H."/>
            <person name="Wang Y."/>
        </authorList>
    </citation>
    <scope>FUNCTION (ASPROSIN)</scope>
</reference>
<reference key="13">
    <citation type="journal article" date="2019" name="J. Cell. Physiol.">
        <title>Asprosin attenuates insulin signaling pathway through PKCdelta-activated ER stress and inflammation in skeletal muscle.</title>
        <authorList>
            <person name="Jung T.W."/>
            <person name="Kim H.C."/>
            <person name="Kim H.U."/>
            <person name="Park T."/>
            <person name="Park J."/>
            <person name="Kim U."/>
            <person name="Kim M.K."/>
            <person name="Jeong J.H."/>
        </authorList>
    </citation>
    <scope>FUNCTION (ASPROSIN)</scope>
</reference>
<reference key="14">
    <citation type="journal article" date="2020" name="Cell Discov.">
        <title>The Asprosin-OLFR734 module regulates appetitive behaviors.</title>
        <authorList>
            <person name="Liu Y."/>
            <person name="Long A."/>
            <person name="Chen L."/>
            <person name="Jia L."/>
            <person name="Wang Y."/>
        </authorList>
    </citation>
    <scope>FUNCTION (ASPROSIN)</scope>
</reference>
<reference key="15">
    <citation type="journal article" date="2021" name="Elife">
        <title>Asprosin-neutralizing antibodies as a treatment for metabolic syndrome.</title>
        <authorList>
            <person name="Mishra I."/>
            <person name="Duerrschmid C."/>
            <person name="Ku Z."/>
            <person name="He Y."/>
            <person name="Xie W."/>
            <person name="Silva E.S."/>
            <person name="Hoffman J."/>
            <person name="Xin W."/>
            <person name="Zhang N."/>
            <person name="Xu Y."/>
            <person name="An Z."/>
            <person name="Chopra A.R."/>
        </authorList>
    </citation>
    <scope>BIOTECHNOLOGY (ASPROSIN)</scope>
</reference>
<reference key="16">
    <citation type="journal article" date="2021" name="J. Endocrinol.">
        <title>Novel adipokine asprosin modulates browning and adipogenesis in white adipose tissue.</title>
        <authorList>
            <person name="Miao Y."/>
            <person name="Qin H."/>
            <person name="Zhong Y."/>
            <person name="Huang K."/>
            <person name="Rao C."/>
        </authorList>
    </citation>
    <scope>FUNCTION (ASPROSIN)</scope>
</reference>
<dbReference type="EMBL" id="L29454">
    <property type="protein sequence ID" value="AAA56840.1"/>
    <property type="molecule type" value="mRNA"/>
</dbReference>
<dbReference type="EMBL" id="U22493">
    <property type="protein sequence ID" value="AAA64217.1"/>
    <property type="molecule type" value="mRNA"/>
</dbReference>
<dbReference type="EMBL" id="AL844547">
    <property type="status" value="NOT_ANNOTATED_CDS"/>
    <property type="molecule type" value="Genomic_DNA"/>
</dbReference>
<dbReference type="EMBL" id="AL928930">
    <property type="status" value="NOT_ANNOTATED_CDS"/>
    <property type="molecule type" value="Genomic_DNA"/>
</dbReference>
<dbReference type="CCDS" id="CCDS16676.1"/>
<dbReference type="PIR" id="A55624">
    <property type="entry name" value="A55624"/>
</dbReference>
<dbReference type="RefSeq" id="NP_032019.2">
    <property type="nucleotide sequence ID" value="NM_007993.2"/>
</dbReference>
<dbReference type="RefSeq" id="XP_006498810.1">
    <property type="nucleotide sequence ID" value="XM_006498747.2"/>
</dbReference>
<dbReference type="BMRB" id="Q61554"/>
<dbReference type="SMR" id="Q61554"/>
<dbReference type="FunCoup" id="Q61554">
    <property type="interactions" value="442"/>
</dbReference>
<dbReference type="IntAct" id="Q61554">
    <property type="interactions" value="1"/>
</dbReference>
<dbReference type="STRING" id="10090.ENSMUSP00000099524"/>
<dbReference type="GlyCosmos" id="Q61554">
    <property type="glycosylation" value="36 sites, No reported glycans"/>
</dbReference>
<dbReference type="GlyGen" id="Q61554">
    <property type="glycosylation" value="37 sites, 4 N-linked glycans (4 sites), 1 O-linked glycan (1 site)"/>
</dbReference>
<dbReference type="iPTMnet" id="Q61554"/>
<dbReference type="PhosphoSitePlus" id="Q61554"/>
<dbReference type="jPOST" id="Q61554"/>
<dbReference type="PaxDb" id="10090-ENSMUSP00000028633"/>
<dbReference type="PeptideAtlas" id="Q61554"/>
<dbReference type="ProteomicsDB" id="267344"/>
<dbReference type="Pumba" id="Q61554"/>
<dbReference type="Antibodypedia" id="2908">
    <property type="antibodies" value="520 antibodies from 37 providers"/>
</dbReference>
<dbReference type="DNASU" id="14118"/>
<dbReference type="Ensembl" id="ENSMUST00000028633.13">
    <property type="protein sequence ID" value="ENSMUSP00000028633.7"/>
    <property type="gene ID" value="ENSMUSG00000027204.14"/>
</dbReference>
<dbReference type="Ensembl" id="ENSMUST00000103234.2">
    <property type="protein sequence ID" value="ENSMUSP00000099524.2"/>
    <property type="gene ID" value="ENSMUSG00000027204.14"/>
</dbReference>
<dbReference type="GeneID" id="14118"/>
<dbReference type="KEGG" id="mmu:14118"/>
<dbReference type="UCSC" id="uc008mco.1">
    <property type="organism name" value="mouse"/>
</dbReference>
<dbReference type="AGR" id="MGI:95489"/>
<dbReference type="CTD" id="2200"/>
<dbReference type="MGI" id="MGI:95489">
    <property type="gene designation" value="Fbn1"/>
</dbReference>
<dbReference type="VEuPathDB" id="HostDB:ENSMUSG00000027204"/>
<dbReference type="eggNOG" id="KOG1217">
    <property type="taxonomic scope" value="Eukaryota"/>
</dbReference>
<dbReference type="GeneTree" id="ENSGT00950000183158"/>
<dbReference type="InParanoid" id="Q61554"/>
<dbReference type="OMA" id="DPKCHAG"/>
<dbReference type="OrthoDB" id="4062651at2759"/>
<dbReference type="PhylomeDB" id="Q61554"/>
<dbReference type="TreeFam" id="TF316849"/>
<dbReference type="Reactome" id="R-MMU-1474228">
    <property type="pathway name" value="Degradation of the extracellular matrix"/>
</dbReference>
<dbReference type="Reactome" id="R-MMU-1566948">
    <property type="pathway name" value="Elastic fibre formation"/>
</dbReference>
<dbReference type="Reactome" id="R-MMU-2129379">
    <property type="pathway name" value="Molecules associated with elastic fibres"/>
</dbReference>
<dbReference type="Reactome" id="R-MMU-216083">
    <property type="pathway name" value="Integrin cell surface interactions"/>
</dbReference>
<dbReference type="Reactome" id="R-MMU-2173789">
    <property type="pathway name" value="TGF-beta receptor signaling activates SMADs"/>
</dbReference>
<dbReference type="Reactome" id="R-MMU-381426">
    <property type="pathway name" value="Regulation of Insulin-like Growth Factor (IGF) transport and uptake by Insulin-like Growth Factor Binding Proteins (IGFBPs)"/>
</dbReference>
<dbReference type="Reactome" id="R-MMU-8957275">
    <property type="pathway name" value="Post-translational protein phosphorylation"/>
</dbReference>
<dbReference type="BioGRID-ORCS" id="14118">
    <property type="hits" value="3 hits in 79 CRISPR screens"/>
</dbReference>
<dbReference type="ChiTaRS" id="Fbn1">
    <property type="organism name" value="mouse"/>
</dbReference>
<dbReference type="PRO" id="PR:Q61554"/>
<dbReference type="Proteomes" id="UP000000589">
    <property type="component" value="Chromosome 2"/>
</dbReference>
<dbReference type="RNAct" id="Q61554">
    <property type="molecule type" value="protein"/>
</dbReference>
<dbReference type="Bgee" id="ENSMUSG00000027204">
    <property type="expression patterns" value="Expressed in external carotid artery and 261 other cell types or tissues"/>
</dbReference>
<dbReference type="GO" id="GO:0005604">
    <property type="term" value="C:basement membrane"/>
    <property type="evidence" value="ECO:0007669"/>
    <property type="project" value="Ensembl"/>
</dbReference>
<dbReference type="GO" id="GO:0062023">
    <property type="term" value="C:collagen-containing extracellular matrix"/>
    <property type="evidence" value="ECO:0000314"/>
    <property type="project" value="UniProtKB"/>
</dbReference>
<dbReference type="GO" id="GO:0005576">
    <property type="term" value="C:extracellular region"/>
    <property type="evidence" value="ECO:0000250"/>
    <property type="project" value="UniProtKB"/>
</dbReference>
<dbReference type="GO" id="GO:0005615">
    <property type="term" value="C:extracellular space"/>
    <property type="evidence" value="ECO:0007005"/>
    <property type="project" value="BHF-UCL"/>
</dbReference>
<dbReference type="GO" id="GO:0001527">
    <property type="term" value="C:microfibril"/>
    <property type="evidence" value="ECO:0000314"/>
    <property type="project" value="MGI"/>
</dbReference>
<dbReference type="GO" id="GO:0005509">
    <property type="term" value="F:calcium ion binding"/>
    <property type="evidence" value="ECO:0007669"/>
    <property type="project" value="Ensembl"/>
</dbReference>
<dbReference type="GO" id="GO:0005201">
    <property type="term" value="F:extracellular matrix structural constituent"/>
    <property type="evidence" value="ECO:0007669"/>
    <property type="project" value="Ensembl"/>
</dbReference>
<dbReference type="GO" id="GO:0008201">
    <property type="term" value="F:heparin binding"/>
    <property type="evidence" value="ECO:0000250"/>
    <property type="project" value="UniProtKB"/>
</dbReference>
<dbReference type="GO" id="GO:0005179">
    <property type="term" value="F:hormone activity"/>
    <property type="evidence" value="ECO:0007669"/>
    <property type="project" value="UniProtKB-KW"/>
</dbReference>
<dbReference type="GO" id="GO:0042802">
    <property type="term" value="F:identical protein binding"/>
    <property type="evidence" value="ECO:0007669"/>
    <property type="project" value="Ensembl"/>
</dbReference>
<dbReference type="GO" id="GO:0005178">
    <property type="term" value="F:integrin binding"/>
    <property type="evidence" value="ECO:0007669"/>
    <property type="project" value="Ensembl"/>
</dbReference>
<dbReference type="GO" id="GO:0043010">
    <property type="term" value="P:camera-type eye development"/>
    <property type="evidence" value="ECO:0007669"/>
    <property type="project" value="Ensembl"/>
</dbReference>
<dbReference type="GO" id="GO:0033627">
    <property type="term" value="P:cell adhesion mediated by integrin"/>
    <property type="evidence" value="ECO:0007669"/>
    <property type="project" value="Ensembl"/>
</dbReference>
<dbReference type="GO" id="GO:1990314">
    <property type="term" value="P:cellular response to insulin-like growth factor stimulus"/>
    <property type="evidence" value="ECO:0007669"/>
    <property type="project" value="Ensembl"/>
</dbReference>
<dbReference type="GO" id="GO:0071560">
    <property type="term" value="P:cellular response to transforming growth factor beta stimulus"/>
    <property type="evidence" value="ECO:0007669"/>
    <property type="project" value="Ensembl"/>
</dbReference>
<dbReference type="GO" id="GO:0048048">
    <property type="term" value="P:embryonic eye morphogenesis"/>
    <property type="evidence" value="ECO:0007669"/>
    <property type="project" value="Ensembl"/>
</dbReference>
<dbReference type="GO" id="GO:0010467">
    <property type="term" value="P:gene expression"/>
    <property type="evidence" value="ECO:0000315"/>
    <property type="project" value="MGI"/>
</dbReference>
<dbReference type="GO" id="GO:0007507">
    <property type="term" value="P:heart development"/>
    <property type="evidence" value="ECO:0007669"/>
    <property type="project" value="Ensembl"/>
</dbReference>
<dbReference type="GO" id="GO:0048286">
    <property type="term" value="P:lung alveolus development"/>
    <property type="evidence" value="ECO:0000315"/>
    <property type="project" value="MGI"/>
</dbReference>
<dbReference type="GO" id="GO:0030324">
    <property type="term" value="P:lung development"/>
    <property type="evidence" value="ECO:0000315"/>
    <property type="project" value="MGI"/>
</dbReference>
<dbReference type="GO" id="GO:0001656">
    <property type="term" value="P:metanephros development"/>
    <property type="evidence" value="ECO:0007669"/>
    <property type="project" value="Ensembl"/>
</dbReference>
<dbReference type="GO" id="GO:2001205">
    <property type="term" value="P:negative regulation of osteoclast development"/>
    <property type="evidence" value="ECO:0000314"/>
    <property type="project" value="UniProtKB"/>
</dbReference>
<dbReference type="GO" id="GO:0045671">
    <property type="term" value="P:negative regulation of osteoclast differentiation"/>
    <property type="evidence" value="ECO:0000314"/>
    <property type="project" value="UniProtKB"/>
</dbReference>
<dbReference type="GO" id="GO:0048050">
    <property type="term" value="P:post-embryonic eye morphogenesis"/>
    <property type="evidence" value="ECO:0007669"/>
    <property type="project" value="Ensembl"/>
</dbReference>
<dbReference type="GO" id="GO:0035582">
    <property type="term" value="P:sequestering of BMP in extracellular matrix"/>
    <property type="evidence" value="ECO:0000315"/>
    <property type="project" value="BHF-UCL"/>
</dbReference>
<dbReference type="GO" id="GO:0035583">
    <property type="term" value="P:sequestering of TGFbeta in extracellular matrix"/>
    <property type="evidence" value="ECO:0000315"/>
    <property type="project" value="BHF-UCL"/>
</dbReference>
<dbReference type="GO" id="GO:0001501">
    <property type="term" value="P:skeletal system development"/>
    <property type="evidence" value="ECO:0007669"/>
    <property type="project" value="Ensembl"/>
</dbReference>
<dbReference type="CDD" id="cd00054">
    <property type="entry name" value="EGF_CA"/>
    <property type="match status" value="29"/>
</dbReference>
<dbReference type="FunFam" id="2.10.25.10:FF:000005">
    <property type="entry name" value="Fibrillin 2"/>
    <property type="match status" value="1"/>
</dbReference>
<dbReference type="FunFam" id="2.10.25.10:FF:000023">
    <property type="entry name" value="Fibrillin 2"/>
    <property type="match status" value="2"/>
</dbReference>
<dbReference type="FunFam" id="2.10.25.10:FF:000038">
    <property type="entry name" value="Fibrillin 2"/>
    <property type="match status" value="1"/>
</dbReference>
<dbReference type="FunFam" id="2.10.25.10:FF:000044">
    <property type="entry name" value="Fibrillin 2"/>
    <property type="match status" value="1"/>
</dbReference>
<dbReference type="FunFam" id="2.10.25.10:FF:000049">
    <property type="entry name" value="Fibrillin 2"/>
    <property type="match status" value="2"/>
</dbReference>
<dbReference type="FunFam" id="2.10.25.10:FF:000058">
    <property type="entry name" value="Fibrillin 2"/>
    <property type="match status" value="1"/>
</dbReference>
<dbReference type="FunFam" id="2.10.25.10:FF:000071">
    <property type="entry name" value="Fibrillin 2"/>
    <property type="match status" value="1"/>
</dbReference>
<dbReference type="FunFam" id="2.10.25.10:FF:000086">
    <property type="entry name" value="Fibrillin 2"/>
    <property type="match status" value="1"/>
</dbReference>
<dbReference type="FunFam" id="2.10.25.10:FF:000087">
    <property type="entry name" value="Fibrillin 2"/>
    <property type="match status" value="1"/>
</dbReference>
<dbReference type="FunFam" id="2.10.25.10:FF:000097">
    <property type="entry name" value="Fibrillin 2"/>
    <property type="match status" value="1"/>
</dbReference>
<dbReference type="FunFam" id="2.10.25.10:FF:000107">
    <property type="entry name" value="Fibrillin 2"/>
    <property type="match status" value="1"/>
</dbReference>
<dbReference type="FunFam" id="2.10.25.10:FF:000131">
    <property type="entry name" value="Fibrillin 2"/>
    <property type="match status" value="1"/>
</dbReference>
<dbReference type="FunFam" id="2.10.25.10:FF:000141">
    <property type="entry name" value="Fibrillin 2"/>
    <property type="match status" value="1"/>
</dbReference>
<dbReference type="FunFam" id="2.10.25.10:FF:000159">
    <property type="entry name" value="Fibrillin 2"/>
    <property type="match status" value="1"/>
</dbReference>
<dbReference type="FunFam" id="2.10.25.10:FF:000196">
    <property type="entry name" value="Fibrillin 2"/>
    <property type="match status" value="1"/>
</dbReference>
<dbReference type="FunFam" id="2.10.25.10:FF:000223">
    <property type="entry name" value="Fibrillin 2"/>
    <property type="match status" value="1"/>
</dbReference>
<dbReference type="FunFam" id="3.90.290.10:FF:000005">
    <property type="entry name" value="Fibrillin 2"/>
    <property type="match status" value="1"/>
</dbReference>
<dbReference type="FunFam" id="3.90.290.10:FF:000006">
    <property type="entry name" value="Fibrillin 2"/>
    <property type="match status" value="1"/>
</dbReference>
<dbReference type="FunFam" id="3.90.290.10:FF:000007">
    <property type="entry name" value="Fibrillin 2"/>
    <property type="match status" value="1"/>
</dbReference>
<dbReference type="FunFam" id="3.90.290.10:FF:000009">
    <property type="entry name" value="Fibrillin 2"/>
    <property type="match status" value="1"/>
</dbReference>
<dbReference type="FunFam" id="3.90.290.10:FF:000010">
    <property type="entry name" value="Fibrillin 2"/>
    <property type="match status" value="1"/>
</dbReference>
<dbReference type="FunFam" id="3.90.290.10:FF:000011">
    <property type="entry name" value="Fibrillin 2"/>
    <property type="match status" value="1"/>
</dbReference>
<dbReference type="FunFam" id="2.10.25.10:FF:000133">
    <property type="entry name" value="Fibrillin 3"/>
    <property type="match status" value="1"/>
</dbReference>
<dbReference type="FunFam" id="3.90.290.10:FF:000003">
    <property type="entry name" value="Fibrillin 3"/>
    <property type="match status" value="1"/>
</dbReference>
<dbReference type="FunFam" id="3.90.290.10:FF:000008">
    <property type="entry name" value="Fibrillin 3"/>
    <property type="match status" value="1"/>
</dbReference>
<dbReference type="FunFam" id="3.90.290.10:FF:000020">
    <property type="entry name" value="Fibrillin-1"/>
    <property type="match status" value="1"/>
</dbReference>
<dbReference type="FunFam" id="2.10.25.10:FF:000003">
    <property type="entry name" value="fibrillin-1 isoform X1"/>
    <property type="match status" value="14"/>
</dbReference>
<dbReference type="FunFam" id="2.10.25.10:FF:000019">
    <property type="entry name" value="latent-transforming growth factor beta-binding protein 1 isoform X2"/>
    <property type="match status" value="1"/>
</dbReference>
<dbReference type="FunFam" id="2.10.25.10:FF:000002">
    <property type="entry name" value="Latent-transforming growth factor beta-binding protein 3"/>
    <property type="match status" value="1"/>
</dbReference>
<dbReference type="FunFam" id="2.10.25.10:FF:000014">
    <property type="entry name" value="Latent-transforming growth factor beta-binding protein 3"/>
    <property type="match status" value="1"/>
</dbReference>
<dbReference type="FunFam" id="2.10.25.10:FF:000010">
    <property type="entry name" value="Pro-epidermal growth factor"/>
    <property type="match status" value="2"/>
</dbReference>
<dbReference type="FunFam" id="2.10.25.10:FF:000096">
    <property type="entry name" value="Putative fibrillin 2"/>
    <property type="match status" value="1"/>
</dbReference>
<dbReference type="FunFam" id="2.10.25.10:FF:000024">
    <property type="entry name" value="Putative latent-transforming growth factor beta-binding protein 2"/>
    <property type="match status" value="1"/>
</dbReference>
<dbReference type="FunFam" id="2.10.25.10:FF:000008">
    <property type="entry name" value="Signal peptide, CUB domain, EGF-like 2"/>
    <property type="match status" value="1"/>
</dbReference>
<dbReference type="Gene3D" id="2.10.25.10">
    <property type="entry name" value="Laminin"/>
    <property type="match status" value="46"/>
</dbReference>
<dbReference type="Gene3D" id="3.90.290.10">
    <property type="entry name" value="TGF-beta binding (TB) domain"/>
    <property type="match status" value="9"/>
</dbReference>
<dbReference type="InterPro" id="IPR026823">
    <property type="entry name" value="cEGF"/>
</dbReference>
<dbReference type="InterPro" id="IPR001881">
    <property type="entry name" value="EGF-like_Ca-bd_dom"/>
</dbReference>
<dbReference type="InterPro" id="IPR000742">
    <property type="entry name" value="EGF-like_dom"/>
</dbReference>
<dbReference type="InterPro" id="IPR000152">
    <property type="entry name" value="EGF-type_Asp/Asn_hydroxyl_site"/>
</dbReference>
<dbReference type="InterPro" id="IPR018097">
    <property type="entry name" value="EGF_Ca-bd_CS"/>
</dbReference>
<dbReference type="InterPro" id="IPR024731">
    <property type="entry name" value="EGF_dom"/>
</dbReference>
<dbReference type="InterPro" id="IPR049388">
    <property type="entry name" value="FBN_EGF_N"/>
</dbReference>
<dbReference type="InterPro" id="IPR040872">
    <property type="entry name" value="Fibrillin_U_N"/>
</dbReference>
<dbReference type="InterPro" id="IPR009030">
    <property type="entry name" value="Growth_fac_rcpt_cys_sf"/>
</dbReference>
<dbReference type="InterPro" id="IPR049883">
    <property type="entry name" value="NOTCH1_EGF-like"/>
</dbReference>
<dbReference type="InterPro" id="IPR017878">
    <property type="entry name" value="TB_dom"/>
</dbReference>
<dbReference type="InterPro" id="IPR036773">
    <property type="entry name" value="TB_dom_sf"/>
</dbReference>
<dbReference type="InterPro" id="IPR052080">
    <property type="entry name" value="vWF_C/EGF_Fibrillin"/>
</dbReference>
<dbReference type="PANTHER" id="PTHR47333:SF5">
    <property type="entry name" value="FIBRILLIN-3"/>
    <property type="match status" value="1"/>
</dbReference>
<dbReference type="PANTHER" id="PTHR47333">
    <property type="entry name" value="VON WILLEBRAND FACTOR C AND EGF DOMAIN-CONTAINING PROTEIN"/>
    <property type="match status" value="1"/>
</dbReference>
<dbReference type="Pfam" id="PF12662">
    <property type="entry name" value="cEGF"/>
    <property type="match status" value="3"/>
</dbReference>
<dbReference type="Pfam" id="PF12947">
    <property type="entry name" value="EGF_3"/>
    <property type="match status" value="1"/>
</dbReference>
<dbReference type="Pfam" id="PF07645">
    <property type="entry name" value="EGF_CA"/>
    <property type="match status" value="36"/>
</dbReference>
<dbReference type="Pfam" id="PF21364">
    <property type="entry name" value="EGF_FBN_1st"/>
    <property type="match status" value="1"/>
</dbReference>
<dbReference type="Pfam" id="PF18193">
    <property type="entry name" value="Fibrillin_U_N"/>
    <property type="match status" value="1"/>
</dbReference>
<dbReference type="Pfam" id="PF14670">
    <property type="entry name" value="FXa_inhibition"/>
    <property type="match status" value="1"/>
</dbReference>
<dbReference type="Pfam" id="PF00683">
    <property type="entry name" value="TB"/>
    <property type="match status" value="9"/>
</dbReference>
<dbReference type="PIRSF" id="PIRSF036312">
    <property type="entry name" value="Fibrillin"/>
    <property type="match status" value="1"/>
</dbReference>
<dbReference type="SMART" id="SM00181">
    <property type="entry name" value="EGF"/>
    <property type="match status" value="46"/>
</dbReference>
<dbReference type="SMART" id="SM00179">
    <property type="entry name" value="EGF_CA"/>
    <property type="match status" value="44"/>
</dbReference>
<dbReference type="SUPFAM" id="SSF57196">
    <property type="entry name" value="EGF/Laminin"/>
    <property type="match status" value="12"/>
</dbReference>
<dbReference type="SUPFAM" id="SSF57184">
    <property type="entry name" value="Growth factor receptor domain"/>
    <property type="match status" value="11"/>
</dbReference>
<dbReference type="SUPFAM" id="SSF57581">
    <property type="entry name" value="TB module/8-cys domain"/>
    <property type="match status" value="9"/>
</dbReference>
<dbReference type="PROSITE" id="PS00010">
    <property type="entry name" value="ASX_HYDROXYL"/>
    <property type="match status" value="43"/>
</dbReference>
<dbReference type="PROSITE" id="PS00022">
    <property type="entry name" value="EGF_1"/>
    <property type="match status" value="2"/>
</dbReference>
<dbReference type="PROSITE" id="PS01186">
    <property type="entry name" value="EGF_2"/>
    <property type="match status" value="38"/>
</dbReference>
<dbReference type="PROSITE" id="PS50026">
    <property type="entry name" value="EGF_3"/>
    <property type="match status" value="45"/>
</dbReference>
<dbReference type="PROSITE" id="PS01187">
    <property type="entry name" value="EGF_CA"/>
    <property type="match status" value="43"/>
</dbReference>
<dbReference type="PROSITE" id="PS51364">
    <property type="entry name" value="TB"/>
    <property type="match status" value="9"/>
</dbReference>
<name>FBN1_MOUSE</name>
<comment type="function">
    <molecule>Fibrillin-1</molecule>
    <text evidence="1 7 8">Structural component of the 10-12 nm diameter microfibrils of the extracellular matrix, which conveys both structural and regulatory properties to load-bearing connective tissues. Fibrillin-1-containing microfibrils provide long-term force bearing structural support. In tissues such as the lung, blood vessels and skin, microfibrils form the periphery of the elastic fiber, acting as a scaffold for the deposition of elastin. In addition, microfibrils can occur as elastin-independent networks in tissues such as the ciliary zonule, tendon, cornea and glomerulus where they provide tensile strength and have anchoring roles. Fibrillin-1 also plays a key role in tissue homeostasis through specific interactions with growth factors, such as the bone morphogenetic proteins (BMPs), growth and differentiation factors (GDFs) and latent transforming growth factor-beta-binding proteins (LTBPs), cell-surface integrins and other extracellular matrix protein and proteoglycan components (By similarity). Regulates osteoblast maturation by controlling TGF-beta bioavailability and calibrating TGF-beta and BMP levels, respectively (PubMed:20855508). Negatively regulates osteoclastogenesis by binding and sequestering an osteoclast differentiation and activation factor TNFSF11. This leads to disruption of TNFSF11-induced Ca(2+) signaling and impairment of TNFSF11-mediated nuclear translocation and activation of transcription factor NFATC1 which regulates genes important for osteoclast differentiation and function (PubMed:24039232). Mediates cell adhesion via its binding to cell surface receptors integrins ITGAV:ITGB3 and ITGA5:ITGB1. Binds heparin and this interaction plays an important role in the assembly of microfibrils (By similarity).</text>
</comment>
<comment type="function">
    <molecule>Asprosin</molecule>
    <text evidence="10 11 12 13 14 15">Adipokine secreted by white adipose tissue that plays an important regulatory role in the glucose metabolism of liver, muscle and pancreas (PubMed:30997682, PubMed:31230984). Hormone that targets the liver in response to fasting to increase plasma glucose levels (PubMed:31230984). Binds the olfactory receptor Olfr734 at the surface of hepatocytes and promotes hepatocyte glucose release by activating the protein kinase A activity in the liver, resulting in rapid glucose release into the circulation (PubMed:31230984). May act as a regulator of adaptive thermogenesis by inhibiting browning and energy consumption, while increasing lipid deposition in white adipose tissue (PubMed:33705351). Also acts as an orexigenic hormone that increases appetite: crosses the blood brain barrier and exerts effects on the hypothalamus (PubMed:29106398). In the arcuate nucleus of the hypothalamus, asprosin directly activates orexigenic AgRP neurons and indirectly inhibits anorexigenic POMC neurons, resulting in appetite stimulation (PubMed:29106398, PubMed:32337066). Activates orexigenic AgRP neurons via binding to the olfactory receptor Olfr734 (PubMed:32337066). May also play a role in sperm motility in testis via interaction with Olfr734 receptor (PubMed:31798959).</text>
</comment>
<comment type="subunit">
    <molecule>Fibrillin-1</molecule>
    <text evidence="1 6">Interacts with COL16A1. Interacts with integrin alpha-V/beta-3. Interacts with ADAMTS10; this interaction promotes microfibril assembly (By similarity). Interacts with THSD4; this interaction promotes fibril formation (PubMed:19940141). Interacts (via N-terminal domain) with FBLN2 and FBLN5. Interacts with ELN. Forms a ternary complex with ELN and FBLN2 or FBLN5 and a significant interaction with ELN seen only in the presence of FBLN2 or FBLN5. Interacts (via N-terminal domain) with LTBP2 (via C-terminal domain) in a Ca(+2)-dependent manner. Interacts (via N-terminal domain) with LTBP1 (via C-terminal domain). Interacts with integrins ITGA5:ITGB1, ITGAV:ITGB3 and ITGAV:ITGB6. Interacts (via N-terminal domain) with BMP2, BMP4, BMP7, BMP10 and GDF5. Interacts (via N-terminal domain) with MFAP2 and MFAP5. Interacts with ADAMTSL5. Interacts with MFAP4. Interacts (via N-terminal domain) with TNFSF11 in a Ca(+2)-dependent manner (By similarity). Interacts (via N-terminal domain) with EFEMP2; this interaction inhibits EFEMP2 binding to LOX and ELN (By similarity).</text>
</comment>
<comment type="subcellular location">
    <subcellularLocation>
        <location evidence="1">Secreted</location>
    </subcellularLocation>
    <text evidence="1">Fibrillin-1 and Asprosin chains are still linked together during the secretion from cells, but are subsequently separated by furin.</text>
</comment>
<comment type="subcellular location">
    <molecule>Fibrillin-1</molecule>
    <subcellularLocation>
        <location evidence="8">Secreted</location>
        <location evidence="8">Extracellular space</location>
        <location evidence="8">Extracellular matrix</location>
    </subcellularLocation>
</comment>
<comment type="subcellular location">
    <molecule>Asprosin</molecule>
    <subcellularLocation>
        <location evidence="1">Secreted</location>
    </subcellularLocation>
    <text evidence="1">Secreted by white adipose tissue and circulates in the plasma.</text>
</comment>
<comment type="tissue specificity">
    <molecule>Fibrillin-1</molecule>
    <text evidence="8">Strongly expressed during the first week of osteoblast differentiation.</text>
</comment>
<comment type="tissue specificity">
    <molecule>Asprosin</molecule>
    <text evidence="9">Secreted by white adipose tissue (at protein level).</text>
</comment>
<comment type="developmental stage">
    <molecule>Asprosin</molecule>
    <text evidence="9">Displays circadian oscillation with an acute decrease in levels coinciding with the onset of feeding (at protein level) (PubMed:27087445).</text>
</comment>
<comment type="PTM">
    <text evidence="1">Cleavage of N- and C-terminus by furin is required for incorporation into the extracellular matrix and assembly into microfibrils. The C-terminus, which corresponds to the Asprosin chain, was initially thought to constitute a propeptide. Fibrillin-1 and Asprosin chains are still linked together during the secretion from cells, but are subsequently separated by furin, an essential step for incorporation of Fibrillin-1 into the nascent microfibrils.</text>
</comment>
<comment type="PTM">
    <molecule>Fibrillin-1</molecule>
    <text evidence="1">Forms intermolecular disulfide bonds either with other fibrillin-1 molecules or with other components of the microfibrils.</text>
</comment>
<comment type="PTM">
    <text evidence="1">O-glycosylated on serine residues by POGLUT2 and POGLUT3 which is necessary for efficient protein secretion.</text>
</comment>
<comment type="disruption phenotype">
    <text evidence="5">Neonatal lethality due to ruptured aortic aneurysm, impaired pulmonary function and/or diaphragmatic collapse. Neonatal aorta show a disorganized and poorly developed medial layer but normal levels of elastin cross-links.</text>
</comment>
<comment type="disruption phenotype">
    <molecule>Asprosin</molecule>
    <text evidence="10">Mice lacking Asprosin show low appetite, reduced adiposity and protection from diet-induced obesity.</text>
</comment>
<comment type="biotechnology">
    <molecule>Asprosin</molecule>
    <text evidence="16">Attractive therapeutic target for type II diabetes and metabolic syndrome (PubMed:33904407). Inactivation by monoclonal antibodies that recognize unique Asprosin epitopes reduces appetite, body weight and blood glucose levels in mice with metabolic syndrome, leading to mitigate metabolic syndrome (PubMed:33904407).</text>
</comment>
<comment type="similarity">
    <text evidence="18">Belongs to the fibrillin family.</text>
</comment>
<accession>Q61554</accession>
<accession>A2AQ53</accession>
<accession>Q60826</accession>
<proteinExistence type="evidence at protein level"/>
<sequence length="2873" mass="312298">MRRGGLLEVALAFALLLESYTSHGADANLEAGSLKETRANRAKRRGGGGHDALKGPNVCGSRYNAYCCPGWKTLPGGNQCIVPICRHSCGDGFCSRPNMCTCPSGQISPSCGSRSIQHCSIRCMNGGSCSDDHCLCQKGYIGTHCGQPVCESGCLNGGRCVAPNRCACTYGFTGPQCERDYRTGPCFTVVSNQMCQGQLSGIVCTKTLCCATVGRAWGHPCEMCPAQPHPCRRGFIPNIRTGACQDVDECQAIPGMCQGGNCINTVGSFECKCPAGHKFNEVSQKCEDIDECSTIPGVCDGGECTNTVSSYFCKCPPGFYTSPDGTRCVDVRPGYCYTALANGRCSNQLPQSITKMQCCCDLGRCWSPGVTVAPEMCPIRSTEDFNKLCSVPLVIPGRPEYPPPPIGPLPPVQPVPPGYPPGPVIPAPRPPPEYPYPSPSREPPRVLPFNVTDYCQLVRYLCQNGRCIPTPGSYRCECNKGFQLDIRGECIDVDECEKNPCTGGECINNQGSYTCHCRAGYQSTLTRTECRDIDECLQNGRICNNGRCINTDGSFHCVCNAGFHVTRDGKNCEDMDECSIRNMCLNGMCINEDGSFKCICKPGFQLASDGRYCKDINECETPGICMNGRCVNTDGSYRCECFPGLAVGLDGRVCVDTHMRSTCYGGYRRGQCVKPLFGAVTKSECCCASTEYAFGEPCQPCPAQNSAEYQALCSSGPGMTSAGTDINECALDPDICPNGICENLRGTYKCICNSGYEVDITGKNCVDINECVLNSLLCDNGQCRNTPGSFVCTCPKGFVYKPDLKTCEDIDECESSPCINGVCKNSPGSFICECSPESTLDPTKTICIETIKGTCWQTVIDGRCEININGATLKSECCSSLGAAWGSPCTICQLDPICGKGFSRIKGTQCEDINECEVFPGVCKNGLCVNSRGSFKCECPNGMTLDATGRICLDIRLETCFLKYDDEECTLPIAGRHRMDACCCSVGAAWGTEECEECPLRNSREYEELCPRGPGFATKDITNGKPFFKDINECKMIPSLCTHGKCRNTIGSFKCRCDSGFALDSEERNCTDIDECRISPDLCGRGQCVNTPGDFECKCDEGYESGFMMMKNCMDIDECQRDPLLCRGGICHNTEGSYRCECPPGHQLSPNISACIDINECELSANLCPHGRCVNLIGKYQCACNPGYHPTHDRLFCVDIDECSIMNGGCETFCTNSDGSYECSCQPGFALMPDQRSCTDIDECEDNPNICDGGQCTNIPGEYRCLCYDGFMASEDMKTCVDVNECDLNPNICLSGTCENTKGSFICHCDMGYSGKKGKTGCTDINECEIGAHNCGRHAVCTNTAGSFKCSCSPGWIGDGIKCTDLDECSNGTHMCSQHADCKNTMGSYRCLCKDGYTGDGFTCTDLDECSENLNLCGNGQCLNAPGGYRCECDMGFVPSADGKACEDIDECSLPNICVFGTCHNLPGLFRCECEIGYELDRSGGNCTDVNECLDPTTCISGNCVNTPGSYTCDCPPDFELNPTRVGCVDTRSGNCYLDIRPRGDNGDTACSNEIGVGVSKASCCCSLGKAWGTPCELCPSVNTSEYKILCPGGEGFRPNPITVILEDIDECQELPGLCQGGKCINTFGSFQCRCPTGYYLNEDTRVCDDVNECETPGICGPGTCYNTVGNYTCICPPDYMQVNGGNNCMDMRRSLCYRNYYADNQTCDGELLFNMTKKMCCCSYNIGRAWNKPCEQCPIPSTDEFATLCGSQRPGFVIDIYTGLPVDIDECREIPGVCENGVCINMVGSFRCECPVGFFYNDKLLVCEDIDECQNGPVCQRNAECINTAGSYRCDCKPGYRLTSTGQCNDRNECQEIPNICSHGQCIDTVGSFYCLCHTGFKTNVDQTMCLDINECERDACGNGTCRNTIGSFNCRCNHGFILSHNNDCIDVDECATGNGNLCRNGQCVNTVGSFQCRCNEGYEVAPDGRTCVDINECVLDPGKCAPGTCQNLDGSYRCICPPGYSLQNDKCEDIDECVEEPEICALGTCSNTEGSFKCLCPEGFSLSSTGRRCQDLRMSYCYAKFEGGKCSSPKSRNHSKQECCCALKGEGWGDPCELCPTEPDEAFRQICPFGSGIIVGPDDSAVDMDECKEPDVCRHGQCINTDGSYRCECPFGYILEGNECVDTDECSVGNPCGNGTCKNVIGGFECTCEEGFEPGPMMTCEDINECAQNPLLCAFRCVNTYGSYECKCPVGYVLREDRRMCKDEDECAEGKHDCTEKQMECKNLIGTYMCICGPGYQRRPDGEGCIDENECQTKPGICENGRCLNTLGSYTCECNDGFTASPTQDECLDNREGYCFSEVLQNMCQIGSSNRNPVTKSECCCDGGRGWGPHCEICPFEGTVAYKKLCPHGRGFMTNGADIDECKVIHDVCRNGECVNDRGSYHCICKTGYTPDITGTACVDLNECNQAPKPCNFICKNTEGSYQCSCPKGYILQEDGRSCKDLDECATKQHNCQFLCVNTIGGFTCKCPPGFTQHHTACIDNNECTSDINLCGSKGVCQNTPGSFTCECQRGFSLDQSGASCEDVDECEGNHRCQHGCQNIIGGYRCSCPQGYLQHYQWNQCVDENECLSAHVCGGASCHNTLGSYKCMCPTGFQYEQFSGGCQDINECGSSQAPCSYGCSNTEGGYLCGCPPGYFRIGQGHCVSGMGMGRGGPEPPASSEMDDNSLSPEACYECKINGYPKRGRKRRSTNETDASDIQDGSEMEANVSLASWDVEKPASFAFNISHVNNKVRILELLPALTTLMNHNRYLIESGNEDGFFKINQKEGVSYLHFTKKKPVAGTYSLQISSTPLYKKKELNQLEDRYDKDYLSGELGDNLKMKIQILLH</sequence>
<keyword id="KW-0106">Calcium</keyword>
<keyword id="KW-1015">Disulfide bond</keyword>
<keyword id="KW-0245">EGF-like domain</keyword>
<keyword id="KW-0272">Extracellular matrix</keyword>
<keyword id="KW-0325">Glycoprotein</keyword>
<keyword id="KW-0372">Hormone</keyword>
<keyword id="KW-0597">Phosphoprotein</keyword>
<keyword id="KW-1185">Reference proteome</keyword>
<keyword id="KW-0677">Repeat</keyword>
<keyword id="KW-0964">Secreted</keyword>
<keyword id="KW-0732">Signal</keyword>
<protein>
    <recommendedName>
        <fullName evidence="1">Fibrillin-1</fullName>
    </recommendedName>
    <component>
        <recommendedName>
            <fullName evidence="1">Asprosin</fullName>
        </recommendedName>
    </component>
</protein>
<gene>
    <name evidence="19" type="primary">Fbn1</name>
    <name evidence="17" type="synonym">Fbn-1</name>
</gene>
<feature type="signal peptide" evidence="1">
    <location>
        <begin position="1"/>
        <end position="24"/>
    </location>
</feature>
<feature type="propeptide" id="PRO_0000436883" evidence="1">
    <location>
        <begin position="25"/>
        <end position="44"/>
    </location>
</feature>
<feature type="chain" id="PRO_0000007582" description="Fibrillin-1" evidence="1">
    <location>
        <begin position="45"/>
        <end position="2733"/>
    </location>
</feature>
<feature type="chain" id="PRO_0000436884" description="Asprosin" evidence="1">
    <location>
        <begin position="2734"/>
        <end position="2873"/>
    </location>
</feature>
<feature type="domain" description="EGF-like 1" evidence="3">
    <location>
        <begin position="81"/>
        <end position="112"/>
    </location>
</feature>
<feature type="domain" description="EGF-like 2" evidence="3">
    <location>
        <begin position="115"/>
        <end position="146"/>
    </location>
</feature>
<feature type="domain" description="EGF-like 3" evidence="3">
    <location>
        <begin position="147"/>
        <end position="178"/>
    </location>
</feature>
<feature type="domain" description="TB 1">
    <location>
        <begin position="184"/>
        <end position="236"/>
    </location>
</feature>
<feature type="domain" description="EGF-like 4; calcium-binding" evidence="3">
    <location>
        <begin position="246"/>
        <end position="287"/>
    </location>
</feature>
<feature type="domain" description="EGF-like 5; calcium-binding" evidence="3">
    <location>
        <begin position="288"/>
        <end position="329"/>
    </location>
</feature>
<feature type="domain" description="TB 2">
    <location>
        <begin position="334"/>
        <end position="389"/>
    </location>
</feature>
<feature type="domain" description="EGF-like 6" evidence="3">
    <location>
        <begin position="451"/>
        <end position="491"/>
    </location>
</feature>
<feature type="domain" description="EGF-like 7; calcium-binding" evidence="3">
    <location>
        <begin position="492"/>
        <end position="531"/>
    </location>
</feature>
<feature type="domain" description="EGF-like 8; calcium-binding" evidence="3">
    <location>
        <begin position="532"/>
        <end position="573"/>
    </location>
</feature>
<feature type="domain" description="EGF-like 9; calcium-binding" evidence="3">
    <location>
        <begin position="574"/>
        <end position="614"/>
    </location>
</feature>
<feature type="domain" description="EGF-like 10; calcium-binding" evidence="3">
    <location>
        <begin position="615"/>
        <end position="655"/>
    </location>
</feature>
<feature type="domain" description="TB 3">
    <location>
        <begin position="661"/>
        <end position="713"/>
    </location>
</feature>
<feature type="domain" description="EGF-like 11; calcium-binding" evidence="3">
    <location>
        <begin position="725"/>
        <end position="766"/>
    </location>
</feature>
<feature type="domain" description="EGF-like 12; calcium-binding" evidence="3">
    <location>
        <begin position="767"/>
        <end position="808"/>
    </location>
</feature>
<feature type="domain" description="EGF-like 13; calcium-binding" evidence="3">
    <location>
        <begin position="809"/>
        <end position="848"/>
    </location>
</feature>
<feature type="domain" description="TB 4">
    <location>
        <begin position="853"/>
        <end position="904"/>
    </location>
</feature>
<feature type="domain" description="EGF-like 14; calcium-binding" evidence="3">
    <location>
        <begin position="912"/>
        <end position="953"/>
    </location>
</feature>
<feature type="domain" description="TB 5">
    <location>
        <begin position="958"/>
        <end position="1010"/>
    </location>
</feature>
<feature type="domain" description="EGF-like 15; calcium-binding" evidence="3">
    <location>
        <begin position="1030"/>
        <end position="1071"/>
    </location>
</feature>
<feature type="domain" description="EGF-like 16; calcium-binding" evidence="3">
    <location>
        <begin position="1072"/>
        <end position="1114"/>
    </location>
</feature>
<feature type="domain" description="EGF-like 17; calcium-binding" evidence="3">
    <location>
        <begin position="1115"/>
        <end position="1156"/>
    </location>
</feature>
<feature type="domain" description="EGF-like 18; calcium-binding" evidence="3">
    <location>
        <begin position="1157"/>
        <end position="1198"/>
    </location>
</feature>
<feature type="domain" description="EGF-like 19; calcium-binding" evidence="3">
    <location>
        <begin position="1199"/>
        <end position="1239"/>
    </location>
</feature>
<feature type="domain" description="EGF-like 20; calcium-binding" evidence="3">
    <location>
        <begin position="1240"/>
        <end position="1281"/>
    </location>
</feature>
<feature type="domain" description="EGF-like 21; calcium-binding" evidence="3">
    <location>
        <begin position="1282"/>
        <end position="1323"/>
    </location>
</feature>
<feature type="domain" description="EGF-like 22; calcium-binding" evidence="3">
    <location>
        <begin position="1324"/>
        <end position="1364"/>
    </location>
</feature>
<feature type="domain" description="EGF-like 23; calcium-binding" evidence="3">
    <location>
        <begin position="1365"/>
        <end position="1405"/>
    </location>
</feature>
<feature type="domain" description="EGF-like 24; calcium-binding" evidence="3">
    <location>
        <begin position="1406"/>
        <end position="1447"/>
    </location>
</feature>
<feature type="domain" description="EGF-like 25; calcium-binding" evidence="3">
    <location>
        <begin position="1448"/>
        <end position="1488"/>
    </location>
</feature>
<feature type="domain" description="EGF-like 26; calcium-binding" evidence="3">
    <location>
        <begin position="1489"/>
        <end position="1529"/>
    </location>
</feature>
<feature type="domain" description="TB 6">
    <location>
        <begin position="1534"/>
        <end position="1591"/>
    </location>
</feature>
<feature type="domain" description="EGF-like 27; calcium-binding" evidence="3">
    <location>
        <begin position="1608"/>
        <end position="1649"/>
    </location>
</feature>
<feature type="domain" description="EGF-like 28; calcium-binding" evidence="3">
    <location>
        <begin position="1650"/>
        <end position="1690"/>
    </location>
</feature>
<feature type="domain" description="TB 7">
    <location>
        <begin position="1695"/>
        <end position="1750"/>
    </location>
</feature>
<feature type="domain" description="EGF-like 29; calcium-binding" evidence="3">
    <location>
        <begin position="1768"/>
        <end position="1809"/>
    </location>
</feature>
<feature type="domain" description="EGF-like 30; calcium-binding" evidence="3">
    <location>
        <begin position="1810"/>
        <end position="1850"/>
    </location>
</feature>
<feature type="domain" description="EGF-like 31; calcium-binding" evidence="3">
    <location>
        <begin position="1851"/>
        <end position="1892"/>
    </location>
</feature>
<feature type="domain" description="EGF-like 32; calcium-binding" evidence="3">
    <location>
        <begin position="1893"/>
        <end position="1931"/>
    </location>
</feature>
<feature type="domain" description="EGF-like 33; calcium-binding" evidence="3">
    <location>
        <begin position="1932"/>
        <end position="1974"/>
    </location>
</feature>
<feature type="domain" description="EGF-like 34; calcium-binding" evidence="3">
    <location>
        <begin position="1975"/>
        <end position="2014"/>
    </location>
</feature>
<feature type="domain" description="EGF-like 35; calcium-binding" evidence="3">
    <location>
        <begin position="2015"/>
        <end position="2056"/>
    </location>
</feature>
<feature type="domain" description="TB 8">
    <location>
        <begin position="2061"/>
        <end position="2113"/>
    </location>
</feature>
<feature type="domain" description="EGF-like 36; calcium-binding" evidence="3">
    <location>
        <begin position="2129"/>
        <end position="2167"/>
    </location>
</feature>
<feature type="domain" description="EGF-like 37; calcium-binding" evidence="3">
    <location>
        <begin position="2168"/>
        <end position="2207"/>
    </location>
</feature>
<feature type="domain" description="EGF-like 38; calcium-binding" evidence="3">
    <location>
        <begin position="2208"/>
        <end position="2248"/>
    </location>
</feature>
<feature type="domain" description="EGF-like 39; calcium-binding" evidence="3">
    <location>
        <begin position="2249"/>
        <end position="2292"/>
    </location>
</feature>
<feature type="domain" description="EGF-like 40; calcium-binding" evidence="3">
    <location>
        <begin position="2293"/>
        <end position="2334"/>
    </location>
</feature>
<feature type="domain" description="TB 9">
    <location>
        <begin position="2339"/>
        <end position="2392"/>
    </location>
</feature>
<feature type="domain" description="EGF-like 41; calcium-binding" evidence="3">
    <location>
        <begin position="2404"/>
        <end position="2445"/>
    </location>
</feature>
<feature type="domain" description="EGF-like 42; calcium-binding" evidence="3">
    <location>
        <begin position="2446"/>
        <end position="2486"/>
    </location>
</feature>
<feature type="domain" description="EGF-like 43; calcium-binding" evidence="3">
    <location>
        <begin position="2487"/>
        <end position="2525"/>
    </location>
</feature>
<feature type="domain" description="EGF-like 44; calcium-binding" evidence="3">
    <location>
        <begin position="2526"/>
        <end position="2568"/>
    </location>
</feature>
<feature type="domain" description="EGF-like 45; calcium-binding" evidence="3">
    <location>
        <begin position="2569"/>
        <end position="2608"/>
    </location>
</feature>
<feature type="domain" description="EGF-like 46; calcium-binding" evidence="3">
    <location>
        <begin position="2609"/>
        <end position="2649"/>
    </location>
</feature>
<feature type="domain" description="EGF-like 47; calcium-binding" evidence="3">
    <location>
        <begin position="2650"/>
        <end position="2689"/>
    </location>
</feature>
<feature type="region of interest" description="N-terminal domain" evidence="1">
    <location>
        <begin position="45"/>
        <end position="452"/>
    </location>
</feature>
<feature type="region of interest" description="Fibrillin unique N-terminal (FUN) domain" evidence="1">
    <location>
        <begin position="45"/>
        <end position="81"/>
    </location>
</feature>
<feature type="region of interest" description="Interaction with MFAP4" evidence="1">
    <location>
        <begin position="119"/>
        <end position="329"/>
    </location>
</feature>
<feature type="region of interest" description="Hybrid domain 1" evidence="1">
    <location>
        <begin position="195"/>
        <end position="221"/>
    </location>
</feature>
<feature type="region of interest" description="Hybrid domain 2" evidence="1">
    <location>
        <begin position="862"/>
        <end position="887"/>
    </location>
</feature>
<feature type="region of interest" description="C-terminal domain" evidence="1">
    <location>
        <begin position="1530"/>
        <end position="2733"/>
    </location>
</feature>
<feature type="region of interest" description="Disordered" evidence="4">
    <location>
        <begin position="2728"/>
        <end position="2747"/>
    </location>
</feature>
<feature type="short sequence motif" description="Cell attachment site" evidence="1">
    <location>
        <begin position="1543"/>
        <end position="1545"/>
    </location>
</feature>
<feature type="site" description="Cleavage; by furin" evidence="1">
    <location>
        <begin position="44"/>
        <end position="45"/>
    </location>
</feature>
<feature type="site" description="Cleavage; by furin" evidence="1">
    <location>
        <begin position="2733"/>
        <end position="2734"/>
    </location>
</feature>
<feature type="modified residue" description="Phosphoserine" evidence="1">
    <location>
        <position position="2704"/>
    </location>
</feature>
<feature type="modified residue" description="Phosphoserine" evidence="20">
    <location>
        <position position="2705"/>
    </location>
</feature>
<feature type="modified residue" description="Phosphoserine" evidence="20">
    <location>
        <position position="2711"/>
    </location>
</feature>
<feature type="glycosylation site" description="O-linked (Glc) serine" evidence="1">
    <location>
        <position position="268"/>
    </location>
</feature>
<feature type="glycosylation site" description="N-linked (GlcNAc...) asparagine" evidence="2">
    <location>
        <position position="450"/>
    </location>
</feature>
<feature type="glycosylation site" description="O-linked (Glc) serine" evidence="1">
    <location>
        <position position="473"/>
    </location>
</feature>
<feature type="glycosylation site" description="O-linked (Glc) serine" evidence="1">
    <location>
        <position position="512"/>
    </location>
</feature>
<feature type="glycosylation site" description="N-linked (GlcNAc...) asparagine" evidence="2">
    <location>
        <position position="1069"/>
    </location>
</feature>
<feature type="glycosylation site" description="O-linked (Glc) serine" evidence="1">
    <location>
        <position position="1137"/>
    </location>
</feature>
<feature type="glycosylation site" description="N-linked (GlcNAc...) asparagine" evidence="2">
    <location>
        <position position="1151"/>
    </location>
</feature>
<feature type="glycosylation site" description="O-linked (Glc) serine" evidence="1">
    <location>
        <position position="1220"/>
    </location>
</feature>
<feature type="glycosylation site" description="O-linked (Glc) serine" evidence="1">
    <location>
        <position position="1304"/>
    </location>
</feature>
<feature type="glycosylation site" description="O-linked (Glc) serine" evidence="1">
    <location>
        <position position="1347"/>
    </location>
</feature>
<feature type="glycosylation site" description="N-linked (GlcNAc...) asparagine" evidence="2">
    <location>
        <position position="1371"/>
    </location>
</feature>
<feature type="glycosylation site" description="O-linked (Glc) serine" evidence="1">
    <location>
        <position position="1388"/>
    </location>
</feature>
<feature type="glycosylation site" description="N-linked (GlcNAc...) asparagine" evidence="2">
    <location>
        <position position="1486"/>
    </location>
</feature>
<feature type="glycosylation site" description="O-linked (Glc) serine" evidence="1">
    <location>
        <position position="1510"/>
    </location>
</feature>
<feature type="glycosylation site" description="N-linked (GlcNAc...) asparagine" evidence="2">
    <location>
        <position position="1583"/>
    </location>
</feature>
<feature type="glycosylation site" description="O-linked (Glc) serine" evidence="1">
    <location>
        <position position="1630"/>
    </location>
</feature>
<feature type="glycosylation site" description="N-linked (GlcNAc...) asparagine" evidence="2">
    <location>
        <position position="1671"/>
    </location>
</feature>
<feature type="glycosylation site" description="N-linked (GlcNAc...) asparagine" evidence="2">
    <location>
        <position position="1705"/>
    </location>
</feature>
<feature type="glycosylation site" description="N-linked (GlcNAc...) asparagine" evidence="2">
    <location>
        <position position="1715"/>
    </location>
</feature>
<feature type="glycosylation site" description="O-linked (Glc) serine" evidence="1">
    <location>
        <position position="1832"/>
    </location>
</feature>
<feature type="glycosylation site" description="O-linked (Glc) serine" evidence="1">
    <location>
        <position position="1873"/>
    </location>
</feature>
<feature type="glycosylation site" description="N-linked (GlcNAc...) asparagine" evidence="2">
    <location>
        <position position="1904"/>
    </location>
</feature>
<feature type="glycosylation site" description="O-linked (Glc) serine" evidence="1">
    <location>
        <position position="1913"/>
    </location>
</feature>
<feature type="glycosylation site" description="O-linked (Glc) serine" evidence="1">
    <location>
        <position position="1955"/>
    </location>
</feature>
<feature type="glycosylation site" description="O-linked (Glc) serine" evidence="1">
    <location>
        <position position="2037"/>
    </location>
</feature>
<feature type="glycosylation site" description="N-linked (GlcNAc...) asparagine" evidence="2">
    <location>
        <position position="2079"/>
    </location>
</feature>
<feature type="glycosylation site" description="O-linked (Glc) serine" evidence="1">
    <location>
        <position position="2150"/>
    </location>
</feature>
<feature type="glycosylation site" description="N-linked (GlcNAc...) asparagine" evidence="2">
    <location>
        <position position="2180"/>
    </location>
</feature>
<feature type="glycosylation site" description="O-linked (Glc) serine" evidence="1">
    <location>
        <position position="2229"/>
    </location>
</feature>
<feature type="glycosylation site" description="O-linked (Glc) serine" evidence="1">
    <location>
        <position position="2315"/>
    </location>
</feature>
<feature type="glycosylation site" description="O-linked (Glc) serine" evidence="1">
    <location>
        <position position="2467"/>
    </location>
</feature>
<feature type="glycosylation site" description="O-linked (Glc) serine" evidence="1">
    <location>
        <position position="2549"/>
    </location>
</feature>
<feature type="glycosylation site" description="O-linked (Glc) serine" evidence="1">
    <location>
        <position position="2630"/>
    </location>
</feature>
<feature type="glycosylation site" description="N-linked (GlcNAc...) asparagine" evidence="2">
    <location>
        <position position="2736"/>
    </location>
</feature>
<feature type="glycosylation site" description="N-linked (GlcNAc...) asparagine" evidence="2">
    <location>
        <position position="2752"/>
    </location>
</feature>
<feature type="glycosylation site" description="N-linked (GlcNAc...) asparagine" evidence="2">
    <location>
        <position position="2769"/>
    </location>
</feature>
<feature type="disulfide bond" evidence="1">
    <location>
        <begin position="59"/>
        <end position="68"/>
    </location>
</feature>
<feature type="disulfide bond" evidence="1">
    <location>
        <begin position="67"/>
        <end position="80"/>
    </location>
</feature>
<feature type="disulfide bond" evidence="3">
    <location>
        <begin position="85"/>
        <end position="94"/>
    </location>
</feature>
<feature type="disulfide bond" evidence="3">
    <location>
        <begin position="89"/>
        <end position="100"/>
    </location>
</feature>
<feature type="disulfide bond" evidence="3">
    <location>
        <begin position="102"/>
        <end position="111"/>
    </location>
</feature>
<feature type="disulfide bond" evidence="3">
    <location>
        <begin position="119"/>
        <end position="129"/>
    </location>
</feature>
<feature type="disulfide bond" evidence="3">
    <location>
        <begin position="123"/>
        <end position="134"/>
    </location>
</feature>
<feature type="disulfide bond" evidence="3">
    <location>
        <begin position="136"/>
        <end position="145"/>
    </location>
</feature>
<feature type="disulfide bond" evidence="3">
    <location>
        <begin position="150"/>
        <end position="160"/>
    </location>
</feature>
<feature type="disulfide bond" evidence="3">
    <location>
        <begin position="154"/>
        <end position="166"/>
    </location>
</feature>
<feature type="disulfide bond" evidence="3">
    <location>
        <begin position="168"/>
        <end position="177"/>
    </location>
</feature>
<feature type="disulfide bond" evidence="3">
    <location>
        <begin position="250"/>
        <end position="262"/>
    </location>
</feature>
<feature type="disulfide bond" evidence="3">
    <location>
        <begin position="257"/>
        <end position="271"/>
    </location>
</feature>
<feature type="disulfide bond" evidence="3">
    <location>
        <begin position="273"/>
        <end position="286"/>
    </location>
</feature>
<feature type="disulfide bond" evidence="3">
    <location>
        <begin position="292"/>
        <end position="304"/>
    </location>
</feature>
<feature type="disulfide bond" evidence="3">
    <location>
        <begin position="299"/>
        <end position="313"/>
    </location>
</feature>
<feature type="disulfide bond" evidence="3">
    <location>
        <begin position="315"/>
        <end position="328"/>
    </location>
</feature>
<feature type="disulfide bond" evidence="3">
    <location>
        <begin position="455"/>
        <end position="467"/>
    </location>
</feature>
<feature type="disulfide bond" evidence="3">
    <location>
        <begin position="462"/>
        <end position="476"/>
    </location>
</feature>
<feature type="disulfide bond" evidence="3">
    <location>
        <begin position="478"/>
        <end position="490"/>
    </location>
</feature>
<feature type="disulfide bond" evidence="3">
    <location>
        <begin position="496"/>
        <end position="506"/>
    </location>
</feature>
<feature type="disulfide bond" evidence="3">
    <location>
        <begin position="501"/>
        <end position="515"/>
    </location>
</feature>
<feature type="disulfide bond" evidence="3">
    <location>
        <begin position="517"/>
        <end position="530"/>
    </location>
</feature>
<feature type="disulfide bond" evidence="3">
    <location>
        <begin position="536"/>
        <end position="548"/>
    </location>
</feature>
<feature type="disulfide bond" evidence="3">
    <location>
        <begin position="543"/>
        <end position="557"/>
    </location>
</feature>
<feature type="disulfide bond" evidence="3">
    <location>
        <begin position="559"/>
        <end position="572"/>
    </location>
</feature>
<feature type="disulfide bond" evidence="3">
    <location>
        <begin position="578"/>
        <end position="589"/>
    </location>
</feature>
<feature type="disulfide bond" evidence="3">
    <location>
        <begin position="584"/>
        <end position="598"/>
    </location>
</feature>
<feature type="disulfide bond" evidence="3">
    <location>
        <begin position="600"/>
        <end position="613"/>
    </location>
</feature>
<feature type="disulfide bond" evidence="3">
    <location>
        <begin position="619"/>
        <end position="630"/>
    </location>
</feature>
<feature type="disulfide bond" evidence="3">
    <location>
        <begin position="625"/>
        <end position="639"/>
    </location>
</feature>
<feature type="disulfide bond" evidence="3">
    <location>
        <begin position="641"/>
        <end position="654"/>
    </location>
</feature>
<feature type="disulfide bond" evidence="3">
    <location>
        <begin position="729"/>
        <end position="741"/>
    </location>
</feature>
<feature type="disulfide bond" evidence="3">
    <location>
        <begin position="736"/>
        <end position="750"/>
    </location>
</feature>
<feature type="disulfide bond" evidence="3">
    <location>
        <begin position="752"/>
        <end position="765"/>
    </location>
</feature>
<feature type="disulfide bond" evidence="3">
    <location>
        <begin position="771"/>
        <end position="783"/>
    </location>
</feature>
<feature type="disulfide bond" evidence="3">
    <location>
        <begin position="778"/>
        <end position="792"/>
    </location>
</feature>
<feature type="disulfide bond" evidence="3">
    <location>
        <begin position="794"/>
        <end position="807"/>
    </location>
</feature>
<feature type="disulfide bond" evidence="3">
    <location>
        <begin position="813"/>
        <end position="823"/>
    </location>
</feature>
<feature type="disulfide bond" evidence="3">
    <location>
        <begin position="818"/>
        <end position="832"/>
    </location>
</feature>
<feature type="disulfide bond" evidence="3">
    <location>
        <begin position="834"/>
        <end position="847"/>
    </location>
</feature>
<feature type="disulfide bond" evidence="3">
    <location>
        <begin position="855"/>
        <end position="877"/>
    </location>
</feature>
<feature type="disulfide bond" evidence="3">
    <location>
        <begin position="864"/>
        <end position="889"/>
    </location>
</feature>
<feature type="disulfide bond" evidence="3">
    <location>
        <begin position="878"/>
        <end position="892"/>
    </location>
</feature>
<feature type="disulfide bond" evidence="3">
    <location>
        <begin position="898"/>
        <end position="910"/>
    </location>
</feature>
<feature type="disulfide bond" evidence="3">
    <location>
        <begin position="916"/>
        <end position="928"/>
    </location>
</feature>
<feature type="disulfide bond" evidence="3">
    <location>
        <begin position="923"/>
        <end position="937"/>
    </location>
</feature>
<feature type="disulfide bond" evidence="3">
    <location>
        <begin position="939"/>
        <end position="952"/>
    </location>
</feature>
<feature type="disulfide bond" evidence="3">
    <location>
        <begin position="1034"/>
        <end position="1046"/>
    </location>
</feature>
<feature type="disulfide bond" evidence="3">
    <location>
        <begin position="1041"/>
        <end position="1055"/>
    </location>
</feature>
<feature type="disulfide bond" evidence="3">
    <location>
        <begin position="1057"/>
        <end position="1070"/>
    </location>
</feature>
<feature type="disulfide bond" evidence="3">
    <location>
        <begin position="1076"/>
        <end position="1088"/>
    </location>
</feature>
<feature type="disulfide bond" evidence="3">
    <location>
        <begin position="1083"/>
        <end position="1097"/>
    </location>
</feature>
<feature type="disulfide bond" evidence="3">
    <location>
        <begin position="1099"/>
        <end position="1113"/>
    </location>
</feature>
<feature type="disulfide bond" evidence="3">
    <location>
        <begin position="1119"/>
        <end position="1131"/>
    </location>
</feature>
<feature type="disulfide bond" evidence="3">
    <location>
        <begin position="1126"/>
        <end position="1140"/>
    </location>
</feature>
<feature type="disulfide bond" evidence="3">
    <location>
        <begin position="1142"/>
        <end position="1155"/>
    </location>
</feature>
<feature type="disulfide bond" evidence="3">
    <location>
        <begin position="1161"/>
        <end position="1173"/>
    </location>
</feature>
<feature type="disulfide bond" evidence="3">
    <location>
        <begin position="1168"/>
        <end position="1182"/>
    </location>
</feature>
<feature type="disulfide bond" evidence="3">
    <location>
        <begin position="1184"/>
        <end position="1197"/>
    </location>
</feature>
<feature type="disulfide bond" evidence="3">
    <location>
        <begin position="1203"/>
        <end position="1214"/>
    </location>
</feature>
<feature type="disulfide bond" evidence="3">
    <location>
        <begin position="1210"/>
        <end position="1223"/>
    </location>
</feature>
<feature type="disulfide bond" evidence="3">
    <location>
        <begin position="1225"/>
        <end position="1238"/>
    </location>
</feature>
<feature type="disulfide bond" evidence="3">
    <location>
        <begin position="1244"/>
        <end position="1256"/>
    </location>
</feature>
<feature type="disulfide bond" evidence="3">
    <location>
        <begin position="1251"/>
        <end position="1265"/>
    </location>
</feature>
<feature type="disulfide bond" evidence="3">
    <location>
        <begin position="1267"/>
        <end position="1280"/>
    </location>
</feature>
<feature type="disulfide bond" evidence="3">
    <location>
        <begin position="1286"/>
        <end position="1298"/>
    </location>
</feature>
<feature type="disulfide bond" evidence="3">
    <location>
        <begin position="1293"/>
        <end position="1307"/>
    </location>
</feature>
<feature type="disulfide bond" evidence="3">
    <location>
        <begin position="1309"/>
        <end position="1322"/>
    </location>
</feature>
<feature type="disulfide bond" evidence="3">
    <location>
        <begin position="1328"/>
        <end position="1341"/>
    </location>
</feature>
<feature type="disulfide bond" evidence="3">
    <location>
        <begin position="1335"/>
        <end position="1350"/>
    </location>
</feature>
<feature type="disulfide bond" evidence="3">
    <location>
        <begin position="1352"/>
        <end position="1363"/>
    </location>
</feature>
<feature type="disulfide bond" evidence="3">
    <location>
        <begin position="1369"/>
        <end position="1382"/>
    </location>
</feature>
<feature type="disulfide bond" evidence="3">
    <location>
        <begin position="1376"/>
        <end position="1391"/>
    </location>
</feature>
<feature type="disulfide bond" evidence="3">
    <location>
        <begin position="1393"/>
        <end position="1404"/>
    </location>
</feature>
<feature type="disulfide bond" evidence="3">
    <location>
        <begin position="1410"/>
        <end position="1422"/>
    </location>
</feature>
<feature type="disulfide bond" evidence="3">
    <location>
        <begin position="1417"/>
        <end position="1431"/>
    </location>
</feature>
<feature type="disulfide bond" evidence="3">
    <location>
        <begin position="1433"/>
        <end position="1446"/>
    </location>
</feature>
<feature type="disulfide bond" evidence="3">
    <location>
        <begin position="1452"/>
        <end position="1463"/>
    </location>
</feature>
<feature type="disulfide bond" evidence="3">
    <location>
        <begin position="1458"/>
        <end position="1472"/>
    </location>
</feature>
<feature type="disulfide bond" evidence="3">
    <location>
        <begin position="1474"/>
        <end position="1487"/>
    </location>
</feature>
<feature type="disulfide bond" evidence="3">
    <location>
        <begin position="1493"/>
        <end position="1504"/>
    </location>
</feature>
<feature type="disulfide bond" evidence="3">
    <location>
        <begin position="1499"/>
        <end position="1513"/>
    </location>
</feature>
<feature type="disulfide bond" evidence="3">
    <location>
        <begin position="1515"/>
        <end position="1528"/>
    </location>
</feature>
<feature type="disulfide bond" evidence="3">
    <location>
        <begin position="1536"/>
        <end position="1564"/>
    </location>
</feature>
<feature type="disulfide bond" evidence="3">
    <location>
        <begin position="1551"/>
        <end position="1576"/>
    </location>
</feature>
<feature type="disulfide bond" evidence="3">
    <location>
        <begin position="1565"/>
        <end position="1579"/>
    </location>
</feature>
<feature type="disulfide bond" evidence="3">
    <location>
        <begin position="1566"/>
        <end position="1591"/>
    </location>
</feature>
<feature type="disulfide bond" evidence="3">
    <location>
        <begin position="1612"/>
        <end position="1624"/>
    </location>
</feature>
<feature type="disulfide bond" evidence="3">
    <location>
        <begin position="1619"/>
        <end position="1633"/>
    </location>
</feature>
<feature type="disulfide bond" evidence="3">
    <location>
        <begin position="1635"/>
        <end position="1648"/>
    </location>
</feature>
<feature type="disulfide bond" evidence="3">
    <location>
        <begin position="1654"/>
        <end position="1665"/>
    </location>
</feature>
<feature type="disulfide bond" evidence="3">
    <location>
        <begin position="1660"/>
        <end position="1674"/>
    </location>
</feature>
<feature type="disulfide bond" evidence="3">
    <location>
        <begin position="1676"/>
        <end position="1689"/>
    </location>
</feature>
<feature type="disulfide bond" evidence="3">
    <location>
        <begin position="1772"/>
        <end position="1784"/>
    </location>
</feature>
<feature type="disulfide bond" evidence="3">
    <location>
        <begin position="1779"/>
        <end position="1793"/>
    </location>
</feature>
<feature type="disulfide bond" evidence="3">
    <location>
        <begin position="1795"/>
        <end position="1808"/>
    </location>
</feature>
<feature type="disulfide bond" evidence="3">
    <location>
        <begin position="1814"/>
        <end position="1826"/>
    </location>
</feature>
<feature type="disulfide bond" evidence="3">
    <location>
        <begin position="1820"/>
        <end position="1835"/>
    </location>
</feature>
<feature type="disulfide bond" evidence="3">
    <location>
        <begin position="1837"/>
        <end position="1849"/>
    </location>
</feature>
<feature type="disulfide bond" evidence="3">
    <location>
        <begin position="1855"/>
        <end position="1867"/>
    </location>
</feature>
<feature type="disulfide bond" evidence="3">
    <location>
        <begin position="1862"/>
        <end position="1876"/>
    </location>
</feature>
<feature type="disulfide bond" evidence="3">
    <location>
        <begin position="1878"/>
        <end position="1891"/>
    </location>
</feature>
<feature type="disulfide bond" evidence="3">
    <location>
        <begin position="1897"/>
        <end position="1907"/>
    </location>
</feature>
<feature type="disulfide bond" evidence="3">
    <location>
        <begin position="1902"/>
        <end position="1916"/>
    </location>
</feature>
<feature type="disulfide bond" evidence="3">
    <location>
        <begin position="1918"/>
        <end position="1930"/>
    </location>
</feature>
<feature type="disulfide bond" evidence="3">
    <location>
        <begin position="1936"/>
        <end position="1949"/>
    </location>
</feature>
<feature type="disulfide bond" evidence="3">
    <location>
        <begin position="1944"/>
        <end position="1958"/>
    </location>
</feature>
<feature type="disulfide bond" evidence="3">
    <location>
        <begin position="1960"/>
        <end position="1973"/>
    </location>
</feature>
<feature type="disulfide bond" evidence="3">
    <location>
        <begin position="1979"/>
        <end position="1991"/>
    </location>
</feature>
<feature type="disulfide bond" evidence="3">
    <location>
        <begin position="1986"/>
        <end position="2000"/>
    </location>
</feature>
<feature type="disulfide bond" evidence="3">
    <location>
        <begin position="2002"/>
        <end position="2013"/>
    </location>
</feature>
<feature type="disulfide bond" evidence="3">
    <location>
        <begin position="2019"/>
        <end position="2031"/>
    </location>
</feature>
<feature type="disulfide bond" evidence="3">
    <location>
        <begin position="2026"/>
        <end position="2040"/>
    </location>
</feature>
<feature type="disulfide bond" evidence="3">
    <location>
        <begin position="2042"/>
        <end position="2055"/>
    </location>
</feature>
<feature type="disulfide bond" evidence="1 3">
    <location>
        <begin position="2063"/>
        <end position="2085"/>
    </location>
</feature>
<feature type="disulfide bond" evidence="1 3">
    <location>
        <begin position="2072"/>
        <end position="2098"/>
    </location>
</feature>
<feature type="disulfide bond" evidence="1 3">
    <location>
        <begin position="2086"/>
        <end position="2101"/>
    </location>
</feature>
<feature type="disulfide bond" evidence="1 3">
    <location>
        <begin position="2087"/>
        <end position="2113"/>
    </location>
</feature>
<feature type="disulfide bond" evidence="3">
    <location>
        <begin position="2133"/>
        <end position="2144"/>
    </location>
</feature>
<feature type="disulfide bond" evidence="3">
    <location>
        <begin position="2139"/>
        <end position="2153"/>
    </location>
</feature>
<feature type="disulfide bond" evidence="3">
    <location>
        <begin position="2155"/>
        <end position="2166"/>
    </location>
</feature>
<feature type="disulfide bond" evidence="3">
    <location>
        <begin position="2172"/>
        <end position="2183"/>
    </location>
</feature>
<feature type="disulfide bond" evidence="3">
    <location>
        <begin position="2178"/>
        <end position="2192"/>
    </location>
</feature>
<feature type="disulfide bond" evidence="3">
    <location>
        <begin position="2194"/>
        <end position="2206"/>
    </location>
</feature>
<feature type="disulfide bond" evidence="3">
    <location>
        <begin position="2212"/>
        <end position="2223"/>
    </location>
</feature>
<feature type="disulfide bond" evidence="3">
    <location>
        <begin position="2219"/>
        <end position="2232"/>
    </location>
</feature>
<feature type="disulfide bond" evidence="3">
    <location>
        <begin position="2234"/>
        <end position="2247"/>
    </location>
</feature>
<feature type="disulfide bond" evidence="3">
    <location>
        <begin position="2253"/>
        <end position="2267"/>
    </location>
</feature>
<feature type="disulfide bond" evidence="3">
    <location>
        <begin position="2260"/>
        <end position="2276"/>
    </location>
</feature>
<feature type="disulfide bond" evidence="3">
    <location>
        <begin position="2278"/>
        <end position="2291"/>
    </location>
</feature>
<feature type="disulfide bond" evidence="3">
    <location>
        <begin position="2297"/>
        <end position="2309"/>
    </location>
</feature>
<feature type="disulfide bond" evidence="3">
    <location>
        <begin position="2304"/>
        <end position="2318"/>
    </location>
</feature>
<feature type="disulfide bond" evidence="3">
    <location>
        <begin position="2320"/>
        <end position="2333"/>
    </location>
</feature>
<feature type="disulfide bond" evidence="3">
    <location>
        <begin position="2408"/>
        <end position="2420"/>
    </location>
</feature>
<feature type="disulfide bond" evidence="3">
    <location>
        <begin position="2415"/>
        <end position="2429"/>
    </location>
</feature>
<feature type="disulfide bond" evidence="3">
    <location>
        <begin position="2431"/>
        <end position="2444"/>
    </location>
</feature>
<feature type="disulfide bond" evidence="3">
    <location>
        <begin position="2450"/>
        <end position="2461"/>
    </location>
</feature>
<feature type="disulfide bond" evidence="3">
    <location>
        <begin position="2457"/>
        <end position="2470"/>
    </location>
</feature>
<feature type="disulfide bond" evidence="3">
    <location>
        <begin position="2472"/>
        <end position="2485"/>
    </location>
</feature>
<feature type="disulfide bond" evidence="3">
    <location>
        <begin position="2491"/>
        <end position="2502"/>
    </location>
</feature>
<feature type="disulfide bond" evidence="3">
    <location>
        <begin position="2498"/>
        <end position="2511"/>
    </location>
</feature>
<feature type="disulfide bond" evidence="3">
    <location>
        <begin position="2513"/>
        <end position="2524"/>
    </location>
</feature>
<feature type="disulfide bond" evidence="3">
    <location>
        <begin position="2530"/>
        <end position="2543"/>
    </location>
</feature>
<feature type="disulfide bond" evidence="3">
    <location>
        <begin position="2537"/>
        <end position="2552"/>
    </location>
</feature>
<feature type="disulfide bond" evidence="3">
    <location>
        <begin position="2554"/>
        <end position="2567"/>
    </location>
</feature>
<feature type="disulfide bond" evidence="3">
    <location>
        <begin position="2573"/>
        <end position="2583"/>
    </location>
</feature>
<feature type="disulfide bond" evidence="3">
    <location>
        <begin position="2579"/>
        <end position="2592"/>
    </location>
</feature>
<feature type="disulfide bond" evidence="3">
    <location>
        <begin position="2594"/>
        <end position="2607"/>
    </location>
</feature>
<feature type="disulfide bond" evidence="3">
    <location>
        <begin position="2613"/>
        <end position="2624"/>
    </location>
</feature>
<feature type="disulfide bond" evidence="3">
    <location>
        <begin position="2619"/>
        <end position="2633"/>
    </location>
</feature>
<feature type="disulfide bond" evidence="3">
    <location>
        <begin position="2635"/>
        <end position="2648"/>
    </location>
</feature>
<feature type="disulfide bond" evidence="3">
    <location>
        <begin position="2654"/>
        <end position="2665"/>
    </location>
</feature>
<feature type="disulfide bond" evidence="3">
    <location>
        <begin position="2661"/>
        <end position="2674"/>
    </location>
</feature>
<feature type="disulfide bond" evidence="3">
    <location>
        <begin position="2676"/>
        <end position="2688"/>
    </location>
</feature>
<feature type="sequence conflict" description="In Ref. 1; AAA56840." evidence="18" ref="1">
    <original>S</original>
    <variation>N</variation>
    <location>
        <position position="120"/>
    </location>
</feature>
<feature type="sequence conflict" description="In Ref. 1; AAA56840 and 2; AAA64217." evidence="18" ref="1 2">
    <original>A</original>
    <variation>V</variation>
    <location>
        <position position="427"/>
    </location>
</feature>
<feature type="sequence conflict" description="In Ref. 1; AAA56840." evidence="18" ref="1">
    <original>PYPS</original>
    <variation>LY</variation>
    <location>
        <begin position="435"/>
        <end position="438"/>
    </location>
</feature>
<feature type="sequence conflict" description="In Ref. 1; AAA56840." evidence="18" ref="1">
    <original>F</original>
    <variation>V</variation>
    <location>
        <position position="449"/>
    </location>
</feature>
<feature type="sequence conflict" description="In Ref. 1; AAA56840." evidence="18" ref="1">
    <original>TRD</original>
    <variation>SSE</variation>
    <location>
        <begin position="566"/>
        <end position="568"/>
    </location>
</feature>
<feature type="sequence conflict" description="In Ref. 1; AAA56840." evidence="18" ref="1">
    <original>SIRNMCL</original>
    <variation>RTPNMCP</variation>
    <location>
        <begin position="579"/>
        <end position="585"/>
    </location>
</feature>
<feature type="sequence conflict" description="In Ref. 2; AAA64217." evidence="18" ref="2">
    <original>S</original>
    <variation>R</variation>
    <location>
        <position position="579"/>
    </location>
</feature>
<feature type="sequence conflict" description="In Ref. 1; AAA56840." evidence="18" ref="1">
    <original>V</original>
    <variation>W</variation>
    <location>
        <position position="653"/>
    </location>
</feature>
<feature type="sequence conflict" description="In Ref. 1; AAA56840." evidence="18" ref="1">
    <original>T</original>
    <variation>S</variation>
    <location>
        <position position="662"/>
    </location>
</feature>
<feature type="sequence conflict" description="In Ref. 1; AAA56840." evidence="18" ref="1">
    <original>S</original>
    <variation>T</variation>
    <location>
        <position position="1137"/>
    </location>
</feature>
<feature type="sequence conflict" description="In Ref. 1; AAA56840." evidence="18" ref="1">
    <original>E</original>
    <variation>Q</variation>
    <location>
        <position position="1243"/>
    </location>
</feature>
<feature type="sequence conflict" description="In Ref. 2; AAA64217." evidence="18" ref="2">
    <original>G</original>
    <variation>A</variation>
    <location>
        <position position="1427"/>
    </location>
</feature>
<feature type="sequence conflict" description="In Ref. 1; AAA56840." evidence="18" ref="1">
    <original>P</original>
    <variation>S</variation>
    <location>
        <position position="1516"/>
    </location>
</feature>
<feature type="sequence conflict" description="In Ref. 1; AAA56840." evidence="18" ref="1">
    <original>D</original>
    <variation>N</variation>
    <location>
        <position position="1539"/>
    </location>
</feature>
<feature type="sequence conflict" description="In Ref. 1; AAA56840." evidence="18" ref="1">
    <original>L</original>
    <variation>I</variation>
    <location>
        <position position="1696"/>
    </location>
</feature>
<feature type="sequence conflict" description="In Ref. 1; AAA56840." evidence="18" ref="1">
    <original>G</original>
    <variation>R</variation>
    <location>
        <position position="1728"/>
    </location>
</feature>
<feature type="sequence conflict" description="In Ref. 1; AAA56840." evidence="18" ref="1">
    <original>Q</original>
    <variation>L</variation>
    <location>
        <position position="1821"/>
    </location>
</feature>
<feature type="sequence conflict" description="In Ref. 1; AAA56840." evidence="18" ref="1">
    <original>V</original>
    <variation>E</variation>
    <location>
        <position position="1886"/>
    </location>
</feature>
<feature type="sequence conflict" description="In Ref. 1; AAA56840." evidence="18" ref="1">
    <original>LSST</original>
    <variation>WSSS</variation>
    <location>
        <begin position="2048"/>
        <end position="2051"/>
    </location>
</feature>
<feature type="sequence conflict" description="In Ref. 1; AAA56840." evidence="18" ref="1">
    <original>LQ</original>
    <variation>FE</variation>
    <location>
        <begin position="2346"/>
        <end position="2347"/>
    </location>
</feature>
<feature type="sequence conflict" description="In Ref. 1; AAA56840." evidence="18" ref="1">
    <original>D</original>
    <variation>V</variation>
    <location>
        <position position="2368"/>
    </location>
</feature>
<feature type="sequence conflict" description="In Ref. 1; AAA56840." evidence="18" ref="1">
    <original>P</original>
    <variation>L</variation>
    <location>
        <position position="2375"/>
    </location>
</feature>
<feature type="sequence conflict" description="In Ref. 1; AAA56840." evidence="18" ref="1">
    <original>I</original>
    <variation>V</variation>
    <location>
        <position position="2405"/>
    </location>
</feature>
<feature type="sequence conflict" description="In Ref. 1; AAA56840." evidence="18" ref="1">
    <original>A</original>
    <variation>S</variation>
    <location>
        <position position="2443"/>
    </location>
</feature>
<feature type="sequence conflict" description="In Ref. 1; AAA56840." evidence="18" ref="1">
    <original>K</original>
    <variation>N</variation>
    <location>
        <position position="2474"/>
    </location>
</feature>
<feature type="sequence conflict" description="In Ref. 1; AAA56840." evidence="18" ref="1">
    <original>V</original>
    <variation>I</variation>
    <location>
        <position position="2542"/>
    </location>
</feature>
<feature type="sequence conflict" description="In Ref. 1; AAA56840." evidence="18" ref="1">
    <original>T</original>
    <variation>A</variation>
    <location>
        <position position="2637"/>
    </location>
</feature>
<feature type="sequence conflict" description="In Ref. 1; AAA56840." evidence="18" ref="1">
    <original>V</original>
    <variation>L</variation>
    <location>
        <position position="2689"/>
    </location>
</feature>
<feature type="sequence conflict" description="In Ref. 1; AAA56840." evidence="18" ref="1">
    <original>G</original>
    <variation>A</variation>
    <location>
        <position position="2698"/>
    </location>
</feature>
<feature type="sequence conflict" description="In Ref. 1; AAA56840." evidence="18" ref="1">
    <original>N</original>
    <variation>S</variation>
    <location>
        <position position="2774"/>
    </location>
</feature>
<feature type="sequence conflict" description="In Ref. 1; AAA56840." evidence="18" ref="1">
    <original>KP</original>
    <variation>NA</variation>
    <location>
        <begin position="2823"/>
        <end position="2824"/>
    </location>
</feature>
<organism>
    <name type="scientific">Mus musculus</name>
    <name type="common">Mouse</name>
    <dbReference type="NCBI Taxonomy" id="10090"/>
    <lineage>
        <taxon>Eukaryota</taxon>
        <taxon>Metazoa</taxon>
        <taxon>Chordata</taxon>
        <taxon>Craniata</taxon>
        <taxon>Vertebrata</taxon>
        <taxon>Euteleostomi</taxon>
        <taxon>Mammalia</taxon>
        <taxon>Eutheria</taxon>
        <taxon>Euarchontoglires</taxon>
        <taxon>Glires</taxon>
        <taxon>Rodentia</taxon>
        <taxon>Myomorpha</taxon>
        <taxon>Muroidea</taxon>
        <taxon>Muridae</taxon>
        <taxon>Murinae</taxon>
        <taxon>Mus</taxon>
        <taxon>Mus</taxon>
    </lineage>
</organism>
<evidence type="ECO:0000250" key="1">
    <source>
        <dbReference type="UniProtKB" id="P35555"/>
    </source>
</evidence>
<evidence type="ECO:0000255" key="2"/>
<evidence type="ECO:0000255" key="3">
    <source>
        <dbReference type="PROSITE-ProRule" id="PRU00076"/>
    </source>
</evidence>
<evidence type="ECO:0000256" key="4">
    <source>
        <dbReference type="SAM" id="MobiDB-lite"/>
    </source>
</evidence>
<evidence type="ECO:0000269" key="5">
    <source>
    </source>
</evidence>
<evidence type="ECO:0000269" key="6">
    <source>
    </source>
</evidence>
<evidence type="ECO:0000269" key="7">
    <source>
    </source>
</evidence>
<evidence type="ECO:0000269" key="8">
    <source>
    </source>
</evidence>
<evidence type="ECO:0000269" key="9">
    <source>
    </source>
</evidence>
<evidence type="ECO:0000269" key="10">
    <source>
    </source>
</evidence>
<evidence type="ECO:0000269" key="11">
    <source>
    </source>
</evidence>
<evidence type="ECO:0000269" key="12">
    <source>
    </source>
</evidence>
<evidence type="ECO:0000269" key="13">
    <source>
    </source>
</evidence>
<evidence type="ECO:0000269" key="14">
    <source>
    </source>
</evidence>
<evidence type="ECO:0000269" key="15">
    <source>
    </source>
</evidence>
<evidence type="ECO:0000269" key="16">
    <source>
    </source>
</evidence>
<evidence type="ECO:0000303" key="17">
    <source>
    </source>
</evidence>
<evidence type="ECO:0000305" key="18"/>
<evidence type="ECO:0000312" key="19">
    <source>
        <dbReference type="MGI" id="MGI:95489"/>
    </source>
</evidence>
<evidence type="ECO:0007744" key="20">
    <source>
    </source>
</evidence>